<evidence type="ECO:0000255" key="1">
    <source>
        <dbReference type="HAMAP-Rule" id="MF_00188"/>
    </source>
</evidence>
<reference key="1">
    <citation type="journal article" date="2001" name="Science">
        <title>Comparative genomics of Listeria species.</title>
        <authorList>
            <person name="Glaser P."/>
            <person name="Frangeul L."/>
            <person name="Buchrieser C."/>
            <person name="Rusniok C."/>
            <person name="Amend A."/>
            <person name="Baquero F."/>
            <person name="Berche P."/>
            <person name="Bloecker H."/>
            <person name="Brandt P."/>
            <person name="Chakraborty T."/>
            <person name="Charbit A."/>
            <person name="Chetouani F."/>
            <person name="Couve E."/>
            <person name="de Daruvar A."/>
            <person name="Dehoux P."/>
            <person name="Domann E."/>
            <person name="Dominguez-Bernal G."/>
            <person name="Duchaud E."/>
            <person name="Durant L."/>
            <person name="Dussurget O."/>
            <person name="Entian K.-D."/>
            <person name="Fsihi H."/>
            <person name="Garcia-del Portillo F."/>
            <person name="Garrido P."/>
            <person name="Gautier L."/>
            <person name="Goebel W."/>
            <person name="Gomez-Lopez N."/>
            <person name="Hain T."/>
            <person name="Hauf J."/>
            <person name="Jackson D."/>
            <person name="Jones L.-M."/>
            <person name="Kaerst U."/>
            <person name="Kreft J."/>
            <person name="Kuhn M."/>
            <person name="Kunst F."/>
            <person name="Kurapkat G."/>
            <person name="Madueno E."/>
            <person name="Maitournam A."/>
            <person name="Mata Vicente J."/>
            <person name="Ng E."/>
            <person name="Nedjari H."/>
            <person name="Nordsiek G."/>
            <person name="Novella S."/>
            <person name="de Pablos B."/>
            <person name="Perez-Diaz J.-C."/>
            <person name="Purcell R."/>
            <person name="Remmel B."/>
            <person name="Rose M."/>
            <person name="Schlueter T."/>
            <person name="Simoes N."/>
            <person name="Tierrez A."/>
            <person name="Vazquez-Boland J.-A."/>
            <person name="Voss H."/>
            <person name="Wehland J."/>
            <person name="Cossart P."/>
        </authorList>
    </citation>
    <scope>NUCLEOTIDE SEQUENCE [LARGE SCALE GENOMIC DNA]</scope>
    <source>
        <strain>ATCC BAA-679 / EGD-e</strain>
    </source>
</reference>
<name>HTPX_LISMO</name>
<feature type="chain" id="PRO_0000138873" description="Protease HtpX homolog">
    <location>
        <begin position="1"/>
        <end position="304"/>
    </location>
</feature>
<feature type="transmembrane region" description="Helical" evidence="1">
    <location>
        <begin position="14"/>
        <end position="34"/>
    </location>
</feature>
<feature type="transmembrane region" description="Helical" evidence="1">
    <location>
        <begin position="39"/>
        <end position="59"/>
    </location>
</feature>
<feature type="transmembrane region" description="Helical" evidence="1">
    <location>
        <begin position="159"/>
        <end position="179"/>
    </location>
</feature>
<feature type="transmembrane region" description="Helical" evidence="1">
    <location>
        <begin position="202"/>
        <end position="222"/>
    </location>
</feature>
<feature type="active site" evidence="1">
    <location>
        <position position="145"/>
    </location>
</feature>
<feature type="binding site" evidence="1">
    <location>
        <position position="144"/>
    </location>
    <ligand>
        <name>Zn(2+)</name>
        <dbReference type="ChEBI" id="CHEBI:29105"/>
        <note>catalytic</note>
    </ligand>
</feature>
<feature type="binding site" evidence="1">
    <location>
        <position position="148"/>
    </location>
    <ligand>
        <name>Zn(2+)</name>
        <dbReference type="ChEBI" id="CHEBI:29105"/>
        <note>catalytic</note>
    </ligand>
</feature>
<feature type="binding site" evidence="1">
    <location>
        <position position="231"/>
    </location>
    <ligand>
        <name>Zn(2+)</name>
        <dbReference type="ChEBI" id="CHEBI:29105"/>
        <note>catalytic</note>
    </ligand>
</feature>
<organism>
    <name type="scientific">Listeria monocytogenes serovar 1/2a (strain ATCC BAA-679 / EGD-e)</name>
    <dbReference type="NCBI Taxonomy" id="169963"/>
    <lineage>
        <taxon>Bacteria</taxon>
        <taxon>Bacillati</taxon>
        <taxon>Bacillota</taxon>
        <taxon>Bacilli</taxon>
        <taxon>Bacillales</taxon>
        <taxon>Listeriaceae</taxon>
        <taxon>Listeria</taxon>
    </lineage>
</organism>
<proteinExistence type="inferred from homology"/>
<gene>
    <name evidence="1" type="primary">htpX</name>
    <name type="ordered locus">lmo0963</name>
</gene>
<sequence length="304" mass="33161">MLFEQIAANKRKTIFIILGFFIFVLMVGAAIGIIVWNNYLNGLVLAAVIGAFYILIMVMSSSSVVMAMNHAKEVTSKEQAPVLWDTVESMAMVAGIPMPKVYIVEDPSPNAFATGISPEKGAVAVTRGLLNKLERYELEGVIAHEISHIRNYDIRLSTIAIALVAVIAILSDIAMRMIFWGSLTGGRNNRKSDNNNSGGAQAIIYIVALIFVILAPIIATAIQFALSRNREYLADASAVELTRNPDGLIQALQKISGDSKKMEEVSASSESIYFSSPLKSKKNKPGLFDSHPPISSRIERLENM</sequence>
<comment type="cofactor">
    <cofactor evidence="1">
        <name>Zn(2+)</name>
        <dbReference type="ChEBI" id="CHEBI:29105"/>
    </cofactor>
    <text evidence="1">Binds 1 zinc ion per subunit.</text>
</comment>
<comment type="subcellular location">
    <subcellularLocation>
        <location evidence="1">Cell membrane</location>
        <topology evidence="1">Multi-pass membrane protein</topology>
    </subcellularLocation>
</comment>
<comment type="similarity">
    <text evidence="1">Belongs to the peptidase M48B family.</text>
</comment>
<keyword id="KW-1003">Cell membrane</keyword>
<keyword id="KW-0378">Hydrolase</keyword>
<keyword id="KW-0472">Membrane</keyword>
<keyword id="KW-0479">Metal-binding</keyword>
<keyword id="KW-0482">Metalloprotease</keyword>
<keyword id="KW-0645">Protease</keyword>
<keyword id="KW-1185">Reference proteome</keyword>
<keyword id="KW-0812">Transmembrane</keyword>
<keyword id="KW-1133">Transmembrane helix</keyword>
<keyword id="KW-0862">Zinc</keyword>
<accession>Q8Y8E1</accession>
<protein>
    <recommendedName>
        <fullName evidence="1">Protease HtpX homolog</fullName>
        <ecNumber evidence="1">3.4.24.-</ecNumber>
    </recommendedName>
</protein>
<dbReference type="EC" id="3.4.24.-" evidence="1"/>
<dbReference type="EMBL" id="AL591977">
    <property type="protein sequence ID" value="CAC99041.1"/>
    <property type="molecule type" value="Genomic_DNA"/>
</dbReference>
<dbReference type="PIR" id="AC1195">
    <property type="entry name" value="AC1195"/>
</dbReference>
<dbReference type="RefSeq" id="NP_464488.1">
    <property type="nucleotide sequence ID" value="NC_003210.1"/>
</dbReference>
<dbReference type="RefSeq" id="WP_010989629.1">
    <property type="nucleotide sequence ID" value="NZ_CP149495.1"/>
</dbReference>
<dbReference type="STRING" id="169963.gene:17593619"/>
<dbReference type="PaxDb" id="169963-lmo0963"/>
<dbReference type="EnsemblBacteria" id="CAC99041">
    <property type="protein sequence ID" value="CAC99041"/>
    <property type="gene ID" value="CAC99041"/>
</dbReference>
<dbReference type="GeneID" id="986470"/>
<dbReference type="KEGG" id="lmo:lmo0963"/>
<dbReference type="PATRIC" id="fig|169963.11.peg.990"/>
<dbReference type="eggNOG" id="COG0501">
    <property type="taxonomic scope" value="Bacteria"/>
</dbReference>
<dbReference type="HOGENOM" id="CLU_042266_2_1_9"/>
<dbReference type="OrthoDB" id="15218at2"/>
<dbReference type="PhylomeDB" id="Q8Y8E1"/>
<dbReference type="BioCyc" id="LMON169963:LMO0963-MONOMER"/>
<dbReference type="Proteomes" id="UP000000817">
    <property type="component" value="Chromosome"/>
</dbReference>
<dbReference type="GO" id="GO:0005886">
    <property type="term" value="C:plasma membrane"/>
    <property type="evidence" value="ECO:0007669"/>
    <property type="project" value="UniProtKB-SubCell"/>
</dbReference>
<dbReference type="GO" id="GO:0004222">
    <property type="term" value="F:metalloendopeptidase activity"/>
    <property type="evidence" value="ECO:0007669"/>
    <property type="project" value="UniProtKB-UniRule"/>
</dbReference>
<dbReference type="GO" id="GO:0008270">
    <property type="term" value="F:zinc ion binding"/>
    <property type="evidence" value="ECO:0007669"/>
    <property type="project" value="UniProtKB-UniRule"/>
</dbReference>
<dbReference type="GO" id="GO:0006508">
    <property type="term" value="P:proteolysis"/>
    <property type="evidence" value="ECO:0007669"/>
    <property type="project" value="UniProtKB-KW"/>
</dbReference>
<dbReference type="CDD" id="cd07340">
    <property type="entry name" value="M48B_Htpx_like"/>
    <property type="match status" value="1"/>
</dbReference>
<dbReference type="Gene3D" id="3.30.2010.10">
    <property type="entry name" value="Metalloproteases ('zincins'), catalytic domain"/>
    <property type="match status" value="1"/>
</dbReference>
<dbReference type="HAMAP" id="MF_00188">
    <property type="entry name" value="Pept_M48_protease_HtpX"/>
    <property type="match status" value="1"/>
</dbReference>
<dbReference type="InterPro" id="IPR050083">
    <property type="entry name" value="HtpX_protease"/>
</dbReference>
<dbReference type="InterPro" id="IPR022919">
    <property type="entry name" value="Pept_M48_protease_HtpX"/>
</dbReference>
<dbReference type="InterPro" id="IPR001915">
    <property type="entry name" value="Peptidase_M48"/>
</dbReference>
<dbReference type="NCBIfam" id="NF003425">
    <property type="entry name" value="PRK04897.1"/>
    <property type="match status" value="1"/>
</dbReference>
<dbReference type="PANTHER" id="PTHR43221">
    <property type="entry name" value="PROTEASE HTPX"/>
    <property type="match status" value="1"/>
</dbReference>
<dbReference type="PANTHER" id="PTHR43221:SF1">
    <property type="entry name" value="PROTEASE HTPX"/>
    <property type="match status" value="1"/>
</dbReference>
<dbReference type="Pfam" id="PF01435">
    <property type="entry name" value="Peptidase_M48"/>
    <property type="match status" value="1"/>
</dbReference>